<accession>Q9JQT2</accession>
<accession>A1IQM5</accession>
<proteinExistence type="inferred from homology"/>
<organism>
    <name type="scientific">Neisseria meningitidis serogroup A / serotype 4A (strain DSM 15465 / Z2491)</name>
    <dbReference type="NCBI Taxonomy" id="122587"/>
    <lineage>
        <taxon>Bacteria</taxon>
        <taxon>Pseudomonadati</taxon>
        <taxon>Pseudomonadota</taxon>
        <taxon>Betaproteobacteria</taxon>
        <taxon>Neisseriales</taxon>
        <taxon>Neisseriaceae</taxon>
        <taxon>Neisseria</taxon>
    </lineage>
</organism>
<gene>
    <name evidence="1" type="primary">rpsO</name>
    <name type="ordered locus">NMA0815</name>
</gene>
<dbReference type="EMBL" id="AL157959">
    <property type="protein sequence ID" value="CAM08057.1"/>
    <property type="molecule type" value="Genomic_DNA"/>
</dbReference>
<dbReference type="PIR" id="B81179">
    <property type="entry name" value="B81179"/>
</dbReference>
<dbReference type="RefSeq" id="WP_002217790.1">
    <property type="nucleotide sequence ID" value="NC_003116.1"/>
</dbReference>
<dbReference type="SMR" id="Q9JQT2"/>
<dbReference type="EnsemblBacteria" id="CAM08057">
    <property type="protein sequence ID" value="CAM08057"/>
    <property type="gene ID" value="NMA0815"/>
</dbReference>
<dbReference type="GeneID" id="93386561"/>
<dbReference type="KEGG" id="nma:NMA0815"/>
<dbReference type="HOGENOM" id="CLU_148518_0_0_4"/>
<dbReference type="Proteomes" id="UP000000626">
    <property type="component" value="Chromosome"/>
</dbReference>
<dbReference type="GO" id="GO:0022627">
    <property type="term" value="C:cytosolic small ribosomal subunit"/>
    <property type="evidence" value="ECO:0007669"/>
    <property type="project" value="TreeGrafter"/>
</dbReference>
<dbReference type="GO" id="GO:0019843">
    <property type="term" value="F:rRNA binding"/>
    <property type="evidence" value="ECO:0007669"/>
    <property type="project" value="UniProtKB-UniRule"/>
</dbReference>
<dbReference type="GO" id="GO:0003735">
    <property type="term" value="F:structural constituent of ribosome"/>
    <property type="evidence" value="ECO:0007669"/>
    <property type="project" value="InterPro"/>
</dbReference>
<dbReference type="GO" id="GO:0006412">
    <property type="term" value="P:translation"/>
    <property type="evidence" value="ECO:0007669"/>
    <property type="project" value="UniProtKB-UniRule"/>
</dbReference>
<dbReference type="CDD" id="cd00353">
    <property type="entry name" value="Ribosomal_S15p_S13e"/>
    <property type="match status" value="1"/>
</dbReference>
<dbReference type="FunFam" id="1.10.287.10:FF:000002">
    <property type="entry name" value="30S ribosomal protein S15"/>
    <property type="match status" value="1"/>
</dbReference>
<dbReference type="Gene3D" id="6.10.250.3130">
    <property type="match status" value="1"/>
</dbReference>
<dbReference type="Gene3D" id="1.10.287.10">
    <property type="entry name" value="S15/NS1, RNA-binding"/>
    <property type="match status" value="1"/>
</dbReference>
<dbReference type="HAMAP" id="MF_01343_B">
    <property type="entry name" value="Ribosomal_uS15_B"/>
    <property type="match status" value="1"/>
</dbReference>
<dbReference type="InterPro" id="IPR000589">
    <property type="entry name" value="Ribosomal_uS15"/>
</dbReference>
<dbReference type="InterPro" id="IPR005290">
    <property type="entry name" value="Ribosomal_uS15_bac-type"/>
</dbReference>
<dbReference type="InterPro" id="IPR009068">
    <property type="entry name" value="uS15_NS1_RNA-bd_sf"/>
</dbReference>
<dbReference type="NCBIfam" id="TIGR00952">
    <property type="entry name" value="S15_bact"/>
    <property type="match status" value="1"/>
</dbReference>
<dbReference type="PANTHER" id="PTHR23321">
    <property type="entry name" value="RIBOSOMAL PROTEIN S15, BACTERIAL AND ORGANELLAR"/>
    <property type="match status" value="1"/>
</dbReference>
<dbReference type="PANTHER" id="PTHR23321:SF26">
    <property type="entry name" value="SMALL RIBOSOMAL SUBUNIT PROTEIN US15M"/>
    <property type="match status" value="1"/>
</dbReference>
<dbReference type="Pfam" id="PF00312">
    <property type="entry name" value="Ribosomal_S15"/>
    <property type="match status" value="1"/>
</dbReference>
<dbReference type="SMART" id="SM01387">
    <property type="entry name" value="Ribosomal_S15"/>
    <property type="match status" value="1"/>
</dbReference>
<dbReference type="SUPFAM" id="SSF47060">
    <property type="entry name" value="S15/NS1 RNA-binding domain"/>
    <property type="match status" value="1"/>
</dbReference>
<dbReference type="PROSITE" id="PS00362">
    <property type="entry name" value="RIBOSOMAL_S15"/>
    <property type="match status" value="1"/>
</dbReference>
<feature type="chain" id="PRO_0000115488" description="Small ribosomal subunit protein uS15">
    <location>
        <begin position="1"/>
        <end position="89"/>
    </location>
</feature>
<sequence length="89" mass="10386">MALTVEQKAQIVKDFQRKEGDTGSSEVQVALLTFRINDLTPHFKANPKDHHSRRGLLKMVSQRRRLLAYLRRTQPDTYRALITRLGLRK</sequence>
<evidence type="ECO:0000255" key="1">
    <source>
        <dbReference type="HAMAP-Rule" id="MF_01343"/>
    </source>
</evidence>
<evidence type="ECO:0000305" key="2"/>
<protein>
    <recommendedName>
        <fullName evidence="1">Small ribosomal subunit protein uS15</fullName>
    </recommendedName>
    <alternativeName>
        <fullName evidence="2">30S ribosomal protein S15</fullName>
    </alternativeName>
</protein>
<reference key="1">
    <citation type="journal article" date="2000" name="Nature">
        <title>Complete DNA sequence of a serogroup A strain of Neisseria meningitidis Z2491.</title>
        <authorList>
            <person name="Parkhill J."/>
            <person name="Achtman M."/>
            <person name="James K.D."/>
            <person name="Bentley S.D."/>
            <person name="Churcher C.M."/>
            <person name="Klee S.R."/>
            <person name="Morelli G."/>
            <person name="Basham D."/>
            <person name="Brown D."/>
            <person name="Chillingworth T."/>
            <person name="Davies R.M."/>
            <person name="Davis P."/>
            <person name="Devlin K."/>
            <person name="Feltwell T."/>
            <person name="Hamlin N."/>
            <person name="Holroyd S."/>
            <person name="Jagels K."/>
            <person name="Leather S."/>
            <person name="Moule S."/>
            <person name="Mungall K.L."/>
            <person name="Quail M.A."/>
            <person name="Rajandream M.A."/>
            <person name="Rutherford K.M."/>
            <person name="Simmonds M."/>
            <person name="Skelton J."/>
            <person name="Whitehead S."/>
            <person name="Spratt B.G."/>
            <person name="Barrell B.G."/>
        </authorList>
    </citation>
    <scope>NUCLEOTIDE SEQUENCE [LARGE SCALE GENOMIC DNA]</scope>
    <source>
        <strain>DSM 15465 / Z2491</strain>
    </source>
</reference>
<keyword id="KW-0687">Ribonucleoprotein</keyword>
<keyword id="KW-0689">Ribosomal protein</keyword>
<keyword id="KW-0694">RNA-binding</keyword>
<keyword id="KW-0699">rRNA-binding</keyword>
<name>RS15_NEIMA</name>
<comment type="function">
    <text evidence="1">One of the primary rRNA binding proteins, it binds directly to 16S rRNA where it helps nucleate assembly of the platform of the 30S subunit by binding and bridging several RNA helices of the 16S rRNA.</text>
</comment>
<comment type="function">
    <text evidence="1">Forms an intersubunit bridge (bridge B4) with the 23S rRNA of the 50S subunit in the ribosome.</text>
</comment>
<comment type="subunit">
    <text evidence="1">Part of the 30S ribosomal subunit. Forms a bridge to the 50S subunit in the 70S ribosome, contacting the 23S rRNA.</text>
</comment>
<comment type="similarity">
    <text evidence="1">Belongs to the universal ribosomal protein uS15 family.</text>
</comment>